<evidence type="ECO:0000255" key="1">
    <source>
        <dbReference type="HAMAP-Rule" id="MF_00121"/>
    </source>
</evidence>
<comment type="function">
    <text evidence="1">Allows the formation of correctly charged Asn-tRNA(Asn) or Gln-tRNA(Gln) through the transamidation of misacylated Asp-tRNA(Asn) or Glu-tRNA(Gln) in organisms which lack either or both of asparaginyl-tRNA or glutaminyl-tRNA synthetases. The reaction takes place in the presence of glutamine and ATP through an activated phospho-Asp-tRNA(Asn) or phospho-Glu-tRNA(Gln).</text>
</comment>
<comment type="catalytic activity">
    <reaction evidence="1">
        <text>L-glutamyl-tRNA(Gln) + L-glutamine + ATP + H2O = L-glutaminyl-tRNA(Gln) + L-glutamate + ADP + phosphate + H(+)</text>
        <dbReference type="Rhea" id="RHEA:17521"/>
        <dbReference type="Rhea" id="RHEA-COMP:9681"/>
        <dbReference type="Rhea" id="RHEA-COMP:9684"/>
        <dbReference type="ChEBI" id="CHEBI:15377"/>
        <dbReference type="ChEBI" id="CHEBI:15378"/>
        <dbReference type="ChEBI" id="CHEBI:29985"/>
        <dbReference type="ChEBI" id="CHEBI:30616"/>
        <dbReference type="ChEBI" id="CHEBI:43474"/>
        <dbReference type="ChEBI" id="CHEBI:58359"/>
        <dbReference type="ChEBI" id="CHEBI:78520"/>
        <dbReference type="ChEBI" id="CHEBI:78521"/>
        <dbReference type="ChEBI" id="CHEBI:456216"/>
    </reaction>
</comment>
<comment type="catalytic activity">
    <reaction evidence="1">
        <text>L-aspartyl-tRNA(Asn) + L-glutamine + ATP + H2O = L-asparaginyl-tRNA(Asn) + L-glutamate + ADP + phosphate + 2 H(+)</text>
        <dbReference type="Rhea" id="RHEA:14513"/>
        <dbReference type="Rhea" id="RHEA-COMP:9674"/>
        <dbReference type="Rhea" id="RHEA-COMP:9677"/>
        <dbReference type="ChEBI" id="CHEBI:15377"/>
        <dbReference type="ChEBI" id="CHEBI:15378"/>
        <dbReference type="ChEBI" id="CHEBI:29985"/>
        <dbReference type="ChEBI" id="CHEBI:30616"/>
        <dbReference type="ChEBI" id="CHEBI:43474"/>
        <dbReference type="ChEBI" id="CHEBI:58359"/>
        <dbReference type="ChEBI" id="CHEBI:78515"/>
        <dbReference type="ChEBI" id="CHEBI:78516"/>
        <dbReference type="ChEBI" id="CHEBI:456216"/>
    </reaction>
</comment>
<comment type="subunit">
    <text evidence="1">Heterotrimer of A, B and C subunits.</text>
</comment>
<comment type="similarity">
    <text evidence="1">Belongs to the GatB/GatE family. GatB subfamily.</text>
</comment>
<accession>A4VZG6</accession>
<keyword id="KW-0067">ATP-binding</keyword>
<keyword id="KW-0436">Ligase</keyword>
<keyword id="KW-0547">Nucleotide-binding</keyword>
<keyword id="KW-0648">Protein biosynthesis</keyword>
<dbReference type="EC" id="6.3.5.-" evidence="1"/>
<dbReference type="EMBL" id="CP000408">
    <property type="protein sequence ID" value="ABP91505.1"/>
    <property type="molecule type" value="Genomic_DNA"/>
</dbReference>
<dbReference type="SMR" id="A4VZG6"/>
<dbReference type="KEGG" id="ssv:SSU98_0347"/>
<dbReference type="HOGENOM" id="CLU_019240_0_0_9"/>
<dbReference type="GO" id="GO:0050566">
    <property type="term" value="F:asparaginyl-tRNA synthase (glutamine-hydrolyzing) activity"/>
    <property type="evidence" value="ECO:0007669"/>
    <property type="project" value="RHEA"/>
</dbReference>
<dbReference type="GO" id="GO:0005524">
    <property type="term" value="F:ATP binding"/>
    <property type="evidence" value="ECO:0007669"/>
    <property type="project" value="UniProtKB-KW"/>
</dbReference>
<dbReference type="GO" id="GO:0050567">
    <property type="term" value="F:glutaminyl-tRNA synthase (glutamine-hydrolyzing) activity"/>
    <property type="evidence" value="ECO:0007669"/>
    <property type="project" value="UniProtKB-UniRule"/>
</dbReference>
<dbReference type="GO" id="GO:0070681">
    <property type="term" value="P:glutaminyl-tRNAGln biosynthesis via transamidation"/>
    <property type="evidence" value="ECO:0007669"/>
    <property type="project" value="TreeGrafter"/>
</dbReference>
<dbReference type="GO" id="GO:0006412">
    <property type="term" value="P:translation"/>
    <property type="evidence" value="ECO:0007669"/>
    <property type="project" value="UniProtKB-UniRule"/>
</dbReference>
<dbReference type="FunFam" id="1.10.10.410:FF:000001">
    <property type="entry name" value="Aspartyl/glutamyl-tRNA(Asn/Gln) amidotransferase subunit B"/>
    <property type="match status" value="1"/>
</dbReference>
<dbReference type="FunFam" id="1.10.150.380:FF:000001">
    <property type="entry name" value="Aspartyl/glutamyl-tRNA(Asn/Gln) amidotransferase subunit B"/>
    <property type="match status" value="1"/>
</dbReference>
<dbReference type="Gene3D" id="1.10.10.410">
    <property type="match status" value="1"/>
</dbReference>
<dbReference type="Gene3D" id="1.10.150.380">
    <property type="entry name" value="GatB domain, N-terminal subdomain"/>
    <property type="match status" value="1"/>
</dbReference>
<dbReference type="HAMAP" id="MF_00121">
    <property type="entry name" value="GatB"/>
    <property type="match status" value="1"/>
</dbReference>
<dbReference type="InterPro" id="IPR017959">
    <property type="entry name" value="Asn/Gln-tRNA_amidoTrfase_suB/E"/>
</dbReference>
<dbReference type="InterPro" id="IPR006075">
    <property type="entry name" value="Asn/Gln-tRNA_Trfase_suB/E_cat"/>
</dbReference>
<dbReference type="InterPro" id="IPR018027">
    <property type="entry name" value="Asn/Gln_amidotransferase"/>
</dbReference>
<dbReference type="InterPro" id="IPR003789">
    <property type="entry name" value="Asn/Gln_tRNA_amidoTrase-B-like"/>
</dbReference>
<dbReference type="InterPro" id="IPR004413">
    <property type="entry name" value="GatB"/>
</dbReference>
<dbReference type="InterPro" id="IPR042114">
    <property type="entry name" value="GatB_C_1"/>
</dbReference>
<dbReference type="InterPro" id="IPR023168">
    <property type="entry name" value="GatB_Yqey_C_2"/>
</dbReference>
<dbReference type="InterPro" id="IPR017958">
    <property type="entry name" value="Gln-tRNA_amidoTrfase_suB_CS"/>
</dbReference>
<dbReference type="InterPro" id="IPR014746">
    <property type="entry name" value="Gln_synth/guanido_kin_cat_dom"/>
</dbReference>
<dbReference type="NCBIfam" id="TIGR00133">
    <property type="entry name" value="gatB"/>
    <property type="match status" value="1"/>
</dbReference>
<dbReference type="NCBIfam" id="NF004011">
    <property type="entry name" value="PRK05477.1-1"/>
    <property type="match status" value="1"/>
</dbReference>
<dbReference type="NCBIfam" id="NF004012">
    <property type="entry name" value="PRK05477.1-2"/>
    <property type="match status" value="1"/>
</dbReference>
<dbReference type="NCBIfam" id="NF004014">
    <property type="entry name" value="PRK05477.1-4"/>
    <property type="match status" value="1"/>
</dbReference>
<dbReference type="PANTHER" id="PTHR11659">
    <property type="entry name" value="GLUTAMYL-TRNA GLN AMIDOTRANSFERASE SUBUNIT B MITOCHONDRIAL AND PROKARYOTIC PET112-RELATED"/>
    <property type="match status" value="1"/>
</dbReference>
<dbReference type="PANTHER" id="PTHR11659:SF0">
    <property type="entry name" value="GLUTAMYL-TRNA(GLN) AMIDOTRANSFERASE SUBUNIT B, MITOCHONDRIAL"/>
    <property type="match status" value="1"/>
</dbReference>
<dbReference type="Pfam" id="PF02934">
    <property type="entry name" value="GatB_N"/>
    <property type="match status" value="1"/>
</dbReference>
<dbReference type="Pfam" id="PF02637">
    <property type="entry name" value="GatB_Yqey"/>
    <property type="match status" value="1"/>
</dbReference>
<dbReference type="SMART" id="SM00845">
    <property type="entry name" value="GatB_Yqey"/>
    <property type="match status" value="1"/>
</dbReference>
<dbReference type="SUPFAM" id="SSF89095">
    <property type="entry name" value="GatB/YqeY motif"/>
    <property type="match status" value="1"/>
</dbReference>
<dbReference type="SUPFAM" id="SSF55931">
    <property type="entry name" value="Glutamine synthetase/guanido kinase"/>
    <property type="match status" value="1"/>
</dbReference>
<dbReference type="PROSITE" id="PS01234">
    <property type="entry name" value="GATB"/>
    <property type="match status" value="1"/>
</dbReference>
<protein>
    <recommendedName>
        <fullName evidence="1">Aspartyl/glutamyl-tRNA(Asn/Gln) amidotransferase subunit B</fullName>
        <shortName evidence="1">Asp/Glu-ADT subunit B</shortName>
        <ecNumber evidence="1">6.3.5.-</ecNumber>
    </recommendedName>
</protein>
<proteinExistence type="inferred from homology"/>
<name>GATB_STRS2</name>
<reference key="1">
    <citation type="journal article" date="2007" name="PLoS ONE">
        <title>A glimpse of streptococcal toxic shock syndrome from comparative genomics of S. suis 2 Chinese isolates.</title>
        <authorList>
            <person name="Chen C."/>
            <person name="Tang J."/>
            <person name="Dong W."/>
            <person name="Wang C."/>
            <person name="Feng Y."/>
            <person name="Wang J."/>
            <person name="Zheng F."/>
            <person name="Pan X."/>
            <person name="Liu D."/>
            <person name="Li M."/>
            <person name="Song Y."/>
            <person name="Zhu X."/>
            <person name="Sun H."/>
            <person name="Feng T."/>
            <person name="Guo Z."/>
            <person name="Ju A."/>
            <person name="Ge J."/>
            <person name="Dong Y."/>
            <person name="Sun W."/>
            <person name="Jiang Y."/>
            <person name="Wang J."/>
            <person name="Yan J."/>
            <person name="Yang H."/>
            <person name="Wang X."/>
            <person name="Gao G.F."/>
            <person name="Yang R."/>
            <person name="Wang J."/>
            <person name="Yu J."/>
        </authorList>
    </citation>
    <scope>NUCLEOTIDE SEQUENCE [LARGE SCALE GENOMIC DNA]</scope>
    <source>
        <strain>98HAH33</strain>
    </source>
</reference>
<feature type="chain" id="PRO_1000016049" description="Aspartyl/glutamyl-tRNA(Asn/Gln) amidotransferase subunit B">
    <location>
        <begin position="1"/>
        <end position="479"/>
    </location>
</feature>
<sequence length="479" mass="53184">MNFETIIGLEVHVELNTNSKIFSPSSAHFGEDPNANTNVIDWSFPGVLPVLNKGVVDAGIKAALALNMDIHKDMHFDRKNYFYPDNPKAYQISQFDEPIGYNGWIEIELEDGSTKKIRIERAHLEEDAGKNTHGTDGYSYVDLNRQGVPLIEIVSEADMRSPEEAYAYLTALKEIIQYTGISDVKMEEGSMRVDANISLRPYGQEKFGTKTELKNLNSFNYVRKGLQHEVERQAKILRSGGQIQQETRRYDESTGETILMRVKEGSADYRYFPEPDLPLYEIDDSWIEEVRAELPVFPKARRAHYVENLGLTAYDAGQLTSTKALSDFFEAAVAAGGDAKQVSNWLQGEVAQFLNAEGKTIEQIALTPENLVEMIALIADGTISSKIAKKVFVHLAKEGGSAKAYVEKAGLVQISDPAVLIPIIHQVFADNEAAVADFKSGKRNADKAFTGFLMKATKGQANPQVAQQLLAQELAKLLD</sequence>
<gene>
    <name evidence="1" type="primary">gatB</name>
    <name type="ordered locus">SSU98_0347</name>
</gene>
<organism>
    <name type="scientific">Streptococcus suis (strain 98HAH33)</name>
    <dbReference type="NCBI Taxonomy" id="391296"/>
    <lineage>
        <taxon>Bacteria</taxon>
        <taxon>Bacillati</taxon>
        <taxon>Bacillota</taxon>
        <taxon>Bacilli</taxon>
        <taxon>Lactobacillales</taxon>
        <taxon>Streptococcaceae</taxon>
        <taxon>Streptococcus</taxon>
    </lineage>
</organism>